<evidence type="ECO:0000256" key="1">
    <source>
        <dbReference type="SAM" id="MobiDB-lite"/>
    </source>
</evidence>
<evidence type="ECO:0000269" key="2">
    <source>
    </source>
</evidence>
<evidence type="ECO:0000305" key="3"/>
<dbReference type="EMBL" id="M10931">
    <property type="protein sequence ID" value="AAA27481.1"/>
    <property type="molecule type" value="Genomic_DNA"/>
</dbReference>
<dbReference type="EMBL" id="AE000520">
    <property type="protein sequence ID" value="AAC65736.1"/>
    <property type="molecule type" value="Genomic_DNA"/>
</dbReference>
<dbReference type="PIR" id="A24587">
    <property type="entry name" value="A24587"/>
</dbReference>
<dbReference type="RefSeq" id="WP_010882213.1">
    <property type="nucleotide sequence ID" value="NC_021490.2"/>
</dbReference>
<dbReference type="SMR" id="P07643"/>
<dbReference type="IntAct" id="P07643">
    <property type="interactions" value="2"/>
</dbReference>
<dbReference type="STRING" id="243276.TP_0768"/>
<dbReference type="EnsemblBacteria" id="AAC65736">
    <property type="protein sequence ID" value="AAC65736"/>
    <property type="gene ID" value="TP_0768"/>
</dbReference>
<dbReference type="GeneID" id="93876534"/>
<dbReference type="KEGG" id="tpa:TP_0768"/>
<dbReference type="KEGG" id="tpw:TPANIC_0768"/>
<dbReference type="eggNOG" id="ENOG5031CFT">
    <property type="taxonomic scope" value="Bacteria"/>
</dbReference>
<dbReference type="HOGENOM" id="CLU_871359_0_0_12"/>
<dbReference type="OrthoDB" id="358281at2"/>
<dbReference type="Proteomes" id="UP000000811">
    <property type="component" value="Chromosome"/>
</dbReference>
<dbReference type="GO" id="GO:0005886">
    <property type="term" value="C:plasma membrane"/>
    <property type="evidence" value="ECO:0007669"/>
    <property type="project" value="UniProtKB-SubCell"/>
</dbReference>
<accession>P07643</accession>
<comment type="subcellular location">
    <subcellularLocation>
        <location>Cell membrane</location>
        <topology>Lipid-anchor</topology>
    </subcellularLocation>
</comment>
<comment type="similarity">
    <text evidence="3">To T.phagedenis TmpA.</text>
</comment>
<reference key="1">
    <citation type="journal article" date="1985" name="J. Bacteriol.">
        <title>Genetic characterization and partial sequence determination of a Treponema pallidum operon expressing two immunogenic membrane proteins in Escherichia coli.</title>
        <authorList>
            <person name="Hansen E.B."/>
            <person name="Pedersen P.E."/>
            <person name="Schouls L.M."/>
            <person name="Severin E."/>
            <person name="van Embden J.D.A."/>
        </authorList>
    </citation>
    <scope>NUCLEOTIDE SEQUENCE [GENOMIC DNA]</scope>
    <source>
        <strain>Nichols</strain>
    </source>
</reference>
<reference key="2">
    <citation type="journal article" date="1998" name="Science">
        <title>Complete genome sequence of Treponema pallidum, the syphilis spirochete.</title>
        <authorList>
            <person name="Fraser C.M."/>
            <person name="Norris S.J."/>
            <person name="Weinstock G.M."/>
            <person name="White O."/>
            <person name="Sutton G.G."/>
            <person name="Dodson R.J."/>
            <person name="Gwinn M.L."/>
            <person name="Hickey E.K."/>
            <person name="Clayton R.A."/>
            <person name="Ketchum K.A."/>
            <person name="Sodergren E."/>
            <person name="Hardham J.M."/>
            <person name="McLeod M.P."/>
            <person name="Salzberg S.L."/>
            <person name="Peterson J.D."/>
            <person name="Khalak H.G."/>
            <person name="Richardson D.L."/>
            <person name="Howell J.K."/>
            <person name="Chidambaram M."/>
            <person name="Utterback T.R."/>
            <person name="McDonald L.A."/>
            <person name="Artiach P."/>
            <person name="Bowman C."/>
            <person name="Cotton M.D."/>
            <person name="Fujii C."/>
            <person name="Garland S.A."/>
            <person name="Hatch B."/>
            <person name="Horst K."/>
            <person name="Roberts K.M."/>
            <person name="Sandusky M."/>
            <person name="Weidman J.F."/>
            <person name="Smith H.O."/>
            <person name="Venter J.C."/>
        </authorList>
    </citation>
    <scope>NUCLEOTIDE SEQUENCE [LARGE SCALE GENOMIC DNA]</scope>
    <source>
        <strain>Nichols</strain>
    </source>
</reference>
<reference key="3">
    <citation type="journal article" date="1991" name="Infect. Immun.">
        <title>Characterization of the 35-kilodalton Treponema pallidum subsp. pallidum recombinant lipoprotein TmpC and antibody response to lipidated and nonlipidated T. pallidum antigens.</title>
        <authorList>
            <person name="Schouls L.M."/>
            <person name="van der Heide H.G.J."/>
            <person name="van Embden J.D.A."/>
        </authorList>
    </citation>
    <scope>DIACYLGLYCEROL AT CYS-22</scope>
    <scope>PALMITOYLATION AT CYS-22</scope>
    <scope>MUTAGENESIS OF CYS-22</scope>
    <source>
        <strain>Nichols</strain>
    </source>
</reference>
<sequence>MNAHTLVYSGVALACAAMLGSCASGAKEEAEKKAAEQRALLVESAHADRRLMEARIGAQESGADTQHPELFSQIQDVERQSTDAKIEGDLKKAAGVASEAADKYEILRNRVEVADLQSKIQTHQLAQYDGDSANAAEESWKKALELYETDSAQCLQSTVEALESYRKVAHEGFGRLLPDMKARAGAAKTDVGGLKVAVELRPQLEEADSQYQEAREAEEVNARAKAFSGYHRALEIYTELGKVVRLKKTEAEKALQSAKTKQKASSDLARSADKSAPLPENAQGFSKEPIEVEPLPNDRLNTTQADESAPIPISDTSSPSRVQSRGVEDGGRSPKSSMNEEGASR</sequence>
<keyword id="KW-1003">Cell membrane</keyword>
<keyword id="KW-0449">Lipoprotein</keyword>
<keyword id="KW-0472">Membrane</keyword>
<keyword id="KW-0564">Palmitate</keyword>
<keyword id="KW-1185">Reference proteome</keyword>
<keyword id="KW-0732">Signal</keyword>
<proteinExistence type="evidence at protein level"/>
<protein>
    <recommendedName>
        <fullName>Treponemal membrane protein A</fullName>
    </recommendedName>
    <alternativeName>
        <fullName>Antigen TmpA</fullName>
    </alternativeName>
    <alternativeName>
        <fullName>Membrane protein A</fullName>
    </alternativeName>
</protein>
<feature type="signal peptide">
    <location>
        <begin position="1"/>
        <end position="21"/>
    </location>
</feature>
<feature type="chain" id="PRO_0000018197" description="Treponemal membrane protein A">
    <location>
        <begin position="22"/>
        <end position="345"/>
    </location>
</feature>
<feature type="region of interest" description="Disordered" evidence="1">
    <location>
        <begin position="256"/>
        <end position="345"/>
    </location>
</feature>
<feature type="compositionally biased region" description="Polar residues" evidence="1">
    <location>
        <begin position="314"/>
        <end position="323"/>
    </location>
</feature>
<feature type="lipid moiety-binding region" description="N-palmitoyl cysteine" evidence="2">
    <location>
        <position position="22"/>
    </location>
</feature>
<feature type="lipid moiety-binding region" description="S-diacylglycerol cysteine" evidence="2">
    <location>
        <position position="22"/>
    </location>
</feature>
<feature type="mutagenesis site" description="Loss of lipid incorporation and cleavage at alternative processing site." evidence="2">
    <original>C</original>
    <variation>S</variation>
    <location>
        <position position="22"/>
    </location>
</feature>
<organism>
    <name type="scientific">Treponema pallidum (strain Nichols)</name>
    <dbReference type="NCBI Taxonomy" id="243276"/>
    <lineage>
        <taxon>Bacteria</taxon>
        <taxon>Pseudomonadati</taxon>
        <taxon>Spirochaetota</taxon>
        <taxon>Spirochaetia</taxon>
        <taxon>Spirochaetales</taxon>
        <taxon>Treponemataceae</taxon>
        <taxon>Treponema</taxon>
    </lineage>
</organism>
<name>TMPA_TREPA</name>
<gene>
    <name type="primary">tmpA</name>
    <name type="ordered locus">TP_0768</name>
</gene>